<reference key="1">
    <citation type="journal article" date="2003" name="Biochim. Biophys. Acta">
        <title>Identification and characterization of mouse MTO1 gene related to mitochondrial tRNA modification.</title>
        <authorList>
            <person name="Li R.-H."/>
            <person name="Li X.-M."/>
            <person name="Yan Q.-F."/>
            <person name="Mo J.Q."/>
            <person name="Guan M.-X."/>
        </authorList>
    </citation>
    <scope>NUCLEOTIDE SEQUENCE [MRNA]</scope>
    <scope>TISSUE SPECIFICITY</scope>
    <scope>SUBCELLULAR LOCATION</scope>
</reference>
<reference key="2">
    <citation type="journal article" date="2005" name="Science">
        <title>The transcriptional landscape of the mammalian genome.</title>
        <authorList>
            <person name="Carninci P."/>
            <person name="Kasukawa T."/>
            <person name="Katayama S."/>
            <person name="Gough J."/>
            <person name="Frith M.C."/>
            <person name="Maeda N."/>
            <person name="Oyama R."/>
            <person name="Ravasi T."/>
            <person name="Lenhard B."/>
            <person name="Wells C."/>
            <person name="Kodzius R."/>
            <person name="Shimokawa K."/>
            <person name="Bajic V.B."/>
            <person name="Brenner S.E."/>
            <person name="Batalov S."/>
            <person name="Forrest A.R."/>
            <person name="Zavolan M."/>
            <person name="Davis M.J."/>
            <person name="Wilming L.G."/>
            <person name="Aidinis V."/>
            <person name="Allen J.E."/>
            <person name="Ambesi-Impiombato A."/>
            <person name="Apweiler R."/>
            <person name="Aturaliya R.N."/>
            <person name="Bailey T.L."/>
            <person name="Bansal M."/>
            <person name="Baxter L."/>
            <person name="Beisel K.W."/>
            <person name="Bersano T."/>
            <person name="Bono H."/>
            <person name="Chalk A.M."/>
            <person name="Chiu K.P."/>
            <person name="Choudhary V."/>
            <person name="Christoffels A."/>
            <person name="Clutterbuck D.R."/>
            <person name="Crowe M.L."/>
            <person name="Dalla E."/>
            <person name="Dalrymple B.P."/>
            <person name="de Bono B."/>
            <person name="Della Gatta G."/>
            <person name="di Bernardo D."/>
            <person name="Down T."/>
            <person name="Engstrom P."/>
            <person name="Fagiolini M."/>
            <person name="Faulkner G."/>
            <person name="Fletcher C.F."/>
            <person name="Fukushima T."/>
            <person name="Furuno M."/>
            <person name="Futaki S."/>
            <person name="Gariboldi M."/>
            <person name="Georgii-Hemming P."/>
            <person name="Gingeras T.R."/>
            <person name="Gojobori T."/>
            <person name="Green R.E."/>
            <person name="Gustincich S."/>
            <person name="Harbers M."/>
            <person name="Hayashi Y."/>
            <person name="Hensch T.K."/>
            <person name="Hirokawa N."/>
            <person name="Hill D."/>
            <person name="Huminiecki L."/>
            <person name="Iacono M."/>
            <person name="Ikeo K."/>
            <person name="Iwama A."/>
            <person name="Ishikawa T."/>
            <person name="Jakt M."/>
            <person name="Kanapin A."/>
            <person name="Katoh M."/>
            <person name="Kawasawa Y."/>
            <person name="Kelso J."/>
            <person name="Kitamura H."/>
            <person name="Kitano H."/>
            <person name="Kollias G."/>
            <person name="Krishnan S.P."/>
            <person name="Kruger A."/>
            <person name="Kummerfeld S.K."/>
            <person name="Kurochkin I.V."/>
            <person name="Lareau L.F."/>
            <person name="Lazarevic D."/>
            <person name="Lipovich L."/>
            <person name="Liu J."/>
            <person name="Liuni S."/>
            <person name="McWilliam S."/>
            <person name="Madan Babu M."/>
            <person name="Madera M."/>
            <person name="Marchionni L."/>
            <person name="Matsuda H."/>
            <person name="Matsuzawa S."/>
            <person name="Miki H."/>
            <person name="Mignone F."/>
            <person name="Miyake S."/>
            <person name="Morris K."/>
            <person name="Mottagui-Tabar S."/>
            <person name="Mulder N."/>
            <person name="Nakano N."/>
            <person name="Nakauchi H."/>
            <person name="Ng P."/>
            <person name="Nilsson R."/>
            <person name="Nishiguchi S."/>
            <person name="Nishikawa S."/>
            <person name="Nori F."/>
            <person name="Ohara O."/>
            <person name="Okazaki Y."/>
            <person name="Orlando V."/>
            <person name="Pang K.C."/>
            <person name="Pavan W.J."/>
            <person name="Pavesi G."/>
            <person name="Pesole G."/>
            <person name="Petrovsky N."/>
            <person name="Piazza S."/>
            <person name="Reed J."/>
            <person name="Reid J.F."/>
            <person name="Ring B.Z."/>
            <person name="Ringwald M."/>
            <person name="Rost B."/>
            <person name="Ruan Y."/>
            <person name="Salzberg S.L."/>
            <person name="Sandelin A."/>
            <person name="Schneider C."/>
            <person name="Schoenbach C."/>
            <person name="Sekiguchi K."/>
            <person name="Semple C.A."/>
            <person name="Seno S."/>
            <person name="Sessa L."/>
            <person name="Sheng Y."/>
            <person name="Shibata Y."/>
            <person name="Shimada H."/>
            <person name="Shimada K."/>
            <person name="Silva D."/>
            <person name="Sinclair B."/>
            <person name="Sperling S."/>
            <person name="Stupka E."/>
            <person name="Sugiura K."/>
            <person name="Sultana R."/>
            <person name="Takenaka Y."/>
            <person name="Taki K."/>
            <person name="Tammoja K."/>
            <person name="Tan S.L."/>
            <person name="Tang S."/>
            <person name="Taylor M.S."/>
            <person name="Tegner J."/>
            <person name="Teichmann S.A."/>
            <person name="Ueda H.R."/>
            <person name="van Nimwegen E."/>
            <person name="Verardo R."/>
            <person name="Wei C.L."/>
            <person name="Yagi K."/>
            <person name="Yamanishi H."/>
            <person name="Zabarovsky E."/>
            <person name="Zhu S."/>
            <person name="Zimmer A."/>
            <person name="Hide W."/>
            <person name="Bult C."/>
            <person name="Grimmond S.M."/>
            <person name="Teasdale R.D."/>
            <person name="Liu E.T."/>
            <person name="Brusic V."/>
            <person name="Quackenbush J."/>
            <person name="Wahlestedt C."/>
            <person name="Mattick J.S."/>
            <person name="Hume D.A."/>
            <person name="Kai C."/>
            <person name="Sasaki D."/>
            <person name="Tomaru Y."/>
            <person name="Fukuda S."/>
            <person name="Kanamori-Katayama M."/>
            <person name="Suzuki M."/>
            <person name="Aoki J."/>
            <person name="Arakawa T."/>
            <person name="Iida J."/>
            <person name="Imamura K."/>
            <person name="Itoh M."/>
            <person name="Kato T."/>
            <person name="Kawaji H."/>
            <person name="Kawagashira N."/>
            <person name="Kawashima T."/>
            <person name="Kojima M."/>
            <person name="Kondo S."/>
            <person name="Konno H."/>
            <person name="Nakano K."/>
            <person name="Ninomiya N."/>
            <person name="Nishio T."/>
            <person name="Okada M."/>
            <person name="Plessy C."/>
            <person name="Shibata K."/>
            <person name="Shiraki T."/>
            <person name="Suzuki S."/>
            <person name="Tagami M."/>
            <person name="Waki K."/>
            <person name="Watahiki A."/>
            <person name="Okamura-Oho Y."/>
            <person name="Suzuki H."/>
            <person name="Kawai J."/>
            <person name="Hayashizaki Y."/>
        </authorList>
    </citation>
    <scope>NUCLEOTIDE SEQUENCE [LARGE SCALE MRNA]</scope>
    <source>
        <strain>C57BL/6J</strain>
        <tissue>Tongue</tissue>
    </source>
</reference>
<organism>
    <name type="scientific">Mus musculus</name>
    <name type="common">Mouse</name>
    <dbReference type="NCBI Taxonomy" id="10090"/>
    <lineage>
        <taxon>Eukaryota</taxon>
        <taxon>Metazoa</taxon>
        <taxon>Chordata</taxon>
        <taxon>Craniata</taxon>
        <taxon>Vertebrata</taxon>
        <taxon>Euteleostomi</taxon>
        <taxon>Mammalia</taxon>
        <taxon>Eutheria</taxon>
        <taxon>Euarchontoglires</taxon>
        <taxon>Glires</taxon>
        <taxon>Rodentia</taxon>
        <taxon>Myomorpha</taxon>
        <taxon>Muroidea</taxon>
        <taxon>Muridae</taxon>
        <taxon>Murinae</taxon>
        <taxon>Mus</taxon>
        <taxon>Mus</taxon>
    </lineage>
</organism>
<comment type="function">
    <text evidence="2">Component of the GTPBP3-MTO1 complex that catalyzes the 5-taurinomethyluridine (taum(5)U) modification at the 34th wobble position (U34) of mitochondrial tRNAs (mt-tRNAs), which plays a role in mt-tRNA decoding and mitochondrial translation. Taum(5)U formation on mammalian mt-tRNA requires the presence of both GTPBP3-mediated GTPase activity and MTO1 catalytic activity.</text>
</comment>
<comment type="catalytic activity">
    <reaction evidence="2">
        <text>5,10-methylenetetrahydrofolate + uridine(34) in tRNA + taurine + GTP + A + H2O = 5-taurinomethyluridine(34) in tRNA + 7,8-dihydrofolate + GDP + AH2 + phosphate + H(+)</text>
        <dbReference type="Rhea" id="RHEA:83279"/>
        <dbReference type="Rhea" id="RHEA-COMP:11727"/>
        <dbReference type="Rhea" id="RHEA-COMP:11732"/>
        <dbReference type="ChEBI" id="CHEBI:12071"/>
        <dbReference type="ChEBI" id="CHEBI:13193"/>
        <dbReference type="ChEBI" id="CHEBI:15377"/>
        <dbReference type="ChEBI" id="CHEBI:15378"/>
        <dbReference type="ChEBI" id="CHEBI:17499"/>
        <dbReference type="ChEBI" id="CHEBI:37565"/>
        <dbReference type="ChEBI" id="CHEBI:43474"/>
        <dbReference type="ChEBI" id="CHEBI:57451"/>
        <dbReference type="ChEBI" id="CHEBI:58189"/>
        <dbReference type="ChEBI" id="CHEBI:65315"/>
        <dbReference type="ChEBI" id="CHEBI:87172"/>
        <dbReference type="ChEBI" id="CHEBI:507393"/>
    </reaction>
    <physiologicalReaction direction="left-to-right" evidence="2">
        <dbReference type="Rhea" id="RHEA:83280"/>
    </physiologicalReaction>
</comment>
<comment type="cofactor">
    <cofactor evidence="1">
        <name>FAD</name>
        <dbReference type="ChEBI" id="CHEBI:57692"/>
    </cofactor>
</comment>
<comment type="subunit">
    <text evidence="2">Homodimer; forms a dimer in the presence of potassium. Interacts with GTPBP3; forms the GTPBP3-MTO1 complex composed of homodimers of GTPBP3 and MTO1.</text>
</comment>
<comment type="subcellular location">
    <subcellularLocation>
        <location evidence="4">Mitochondrion</location>
    </subcellularLocation>
</comment>
<comment type="tissue specificity">
    <text evidence="4">Ubiquitously expressed in various tissues, but with markedly elevated expression in tissues of high metabolic rates.</text>
</comment>
<comment type="similarity">
    <text evidence="5">Belongs to the MnmG family.</text>
</comment>
<dbReference type="EMBL" id="AF369902">
    <property type="protein sequence ID" value="AAK63070.1"/>
    <property type="molecule type" value="mRNA"/>
</dbReference>
<dbReference type="EMBL" id="AK019088">
    <property type="protein sequence ID" value="BAB31540.1"/>
    <property type="molecule type" value="mRNA"/>
</dbReference>
<dbReference type="CCDS" id="CCDS23363.1"/>
<dbReference type="RefSeq" id="NP_080934.2">
    <property type="nucleotide sequence ID" value="NM_026658.2"/>
</dbReference>
<dbReference type="SMR" id="Q923Z3"/>
<dbReference type="BioGRID" id="212787">
    <property type="interactions" value="2"/>
</dbReference>
<dbReference type="FunCoup" id="Q923Z3">
    <property type="interactions" value="2415"/>
</dbReference>
<dbReference type="STRING" id="10090.ENSMUSP00000034896"/>
<dbReference type="GlyGen" id="Q923Z3">
    <property type="glycosylation" value="1 site, 1 O-linked glycan (1 site)"/>
</dbReference>
<dbReference type="iPTMnet" id="Q923Z3"/>
<dbReference type="PhosphoSitePlus" id="Q923Z3"/>
<dbReference type="PaxDb" id="10090-ENSMUSP00000034896"/>
<dbReference type="ProteomicsDB" id="290113"/>
<dbReference type="Pumba" id="Q923Z3"/>
<dbReference type="DNASU" id="68291"/>
<dbReference type="GeneID" id="68291"/>
<dbReference type="KEGG" id="mmu:68291"/>
<dbReference type="AGR" id="MGI:1915541"/>
<dbReference type="CTD" id="25821"/>
<dbReference type="MGI" id="MGI:1915541">
    <property type="gene designation" value="Mto1"/>
</dbReference>
<dbReference type="eggNOG" id="KOG2311">
    <property type="taxonomic scope" value="Eukaryota"/>
</dbReference>
<dbReference type="InParanoid" id="Q923Z3"/>
<dbReference type="OrthoDB" id="3329at2759"/>
<dbReference type="PhylomeDB" id="Q923Z3"/>
<dbReference type="BioGRID-ORCS" id="68291">
    <property type="hits" value="14 hits in 75 CRISPR screens"/>
</dbReference>
<dbReference type="ChiTaRS" id="Mto1">
    <property type="organism name" value="mouse"/>
</dbReference>
<dbReference type="PRO" id="PR:Q923Z3"/>
<dbReference type="Proteomes" id="UP000000589">
    <property type="component" value="Unplaced"/>
</dbReference>
<dbReference type="RNAct" id="Q923Z3">
    <property type="molecule type" value="protein"/>
</dbReference>
<dbReference type="GO" id="GO:0005739">
    <property type="term" value="C:mitochondrion"/>
    <property type="evidence" value="ECO:0000314"/>
    <property type="project" value="MGI"/>
</dbReference>
<dbReference type="GO" id="GO:0050660">
    <property type="term" value="F:flavin adenine dinucleotide binding"/>
    <property type="evidence" value="ECO:0007669"/>
    <property type="project" value="InterPro"/>
</dbReference>
<dbReference type="GO" id="GO:0160236">
    <property type="term" value="F:tRNA 5-taurinomethyluridine synthase activity"/>
    <property type="evidence" value="ECO:0000250"/>
    <property type="project" value="UniProtKB"/>
</dbReference>
<dbReference type="GO" id="GO:0070899">
    <property type="term" value="P:mitochondrial tRNA wobble uridine modification"/>
    <property type="evidence" value="ECO:0000316"/>
    <property type="project" value="MGI"/>
</dbReference>
<dbReference type="GO" id="GO:0002098">
    <property type="term" value="P:tRNA wobble uridine modification"/>
    <property type="evidence" value="ECO:0000316"/>
    <property type="project" value="MGI"/>
</dbReference>
<dbReference type="FunFam" id="3.50.50.60:FF:000082">
    <property type="entry name" value="protein MTO1 homolog, mitochondrial isoform X1"/>
    <property type="match status" value="1"/>
</dbReference>
<dbReference type="FunFam" id="1.10.150.570:FF:000001">
    <property type="entry name" value="tRNA uridine 5-carboxymethylaminomethyl modification enzyme MnmG"/>
    <property type="match status" value="1"/>
</dbReference>
<dbReference type="FunFam" id="3.50.50.60:FF:000002">
    <property type="entry name" value="tRNA uridine 5-carboxymethylaminomethyl modification enzyme MnmG"/>
    <property type="match status" value="1"/>
</dbReference>
<dbReference type="Gene3D" id="3.50.50.60">
    <property type="entry name" value="FAD/NAD(P)-binding domain"/>
    <property type="match status" value="2"/>
</dbReference>
<dbReference type="Gene3D" id="1.10.150.570">
    <property type="entry name" value="GidA associated domain, C-terminal subdomain"/>
    <property type="match status" value="1"/>
</dbReference>
<dbReference type="HAMAP" id="MF_00129">
    <property type="entry name" value="MnmG_GidA"/>
    <property type="match status" value="1"/>
</dbReference>
<dbReference type="InterPro" id="IPR036188">
    <property type="entry name" value="FAD/NAD-bd_sf"/>
</dbReference>
<dbReference type="InterPro" id="IPR049312">
    <property type="entry name" value="GIDA_C_N"/>
</dbReference>
<dbReference type="InterPro" id="IPR004416">
    <property type="entry name" value="MnmG"/>
</dbReference>
<dbReference type="InterPro" id="IPR002218">
    <property type="entry name" value="MnmG-rel"/>
</dbReference>
<dbReference type="InterPro" id="IPR020595">
    <property type="entry name" value="MnmG-rel_CS"/>
</dbReference>
<dbReference type="InterPro" id="IPR026904">
    <property type="entry name" value="MnmG_C"/>
</dbReference>
<dbReference type="InterPro" id="IPR047001">
    <property type="entry name" value="MnmG_C_subdom"/>
</dbReference>
<dbReference type="InterPro" id="IPR044920">
    <property type="entry name" value="MnmG_C_subdom_sf"/>
</dbReference>
<dbReference type="InterPro" id="IPR040131">
    <property type="entry name" value="MnmG_N"/>
</dbReference>
<dbReference type="NCBIfam" id="TIGR00136">
    <property type="entry name" value="mnmG_gidA"/>
    <property type="match status" value="1"/>
</dbReference>
<dbReference type="PANTHER" id="PTHR11806">
    <property type="entry name" value="GLUCOSE INHIBITED DIVISION PROTEIN A"/>
    <property type="match status" value="1"/>
</dbReference>
<dbReference type="PANTHER" id="PTHR11806:SF0">
    <property type="entry name" value="PROTEIN MTO1 HOMOLOG, MITOCHONDRIAL"/>
    <property type="match status" value="1"/>
</dbReference>
<dbReference type="Pfam" id="PF01134">
    <property type="entry name" value="GIDA"/>
    <property type="match status" value="1"/>
</dbReference>
<dbReference type="Pfam" id="PF21680">
    <property type="entry name" value="GIDA_C_1st"/>
    <property type="match status" value="1"/>
</dbReference>
<dbReference type="Pfam" id="PF13932">
    <property type="entry name" value="SAM_GIDA_C"/>
    <property type="match status" value="1"/>
</dbReference>
<dbReference type="PRINTS" id="PR00368">
    <property type="entry name" value="FADPNR"/>
</dbReference>
<dbReference type="PRINTS" id="PR00411">
    <property type="entry name" value="PNDRDTASEI"/>
</dbReference>
<dbReference type="SMART" id="SM01228">
    <property type="entry name" value="GIDA_assoc_3"/>
    <property type="match status" value="1"/>
</dbReference>
<dbReference type="SUPFAM" id="SSF51905">
    <property type="entry name" value="FAD/NAD(P)-binding domain"/>
    <property type="match status" value="1"/>
</dbReference>
<dbReference type="PROSITE" id="PS01280">
    <property type="entry name" value="GIDA_1"/>
    <property type="match status" value="1"/>
</dbReference>
<dbReference type="PROSITE" id="PS01281">
    <property type="entry name" value="GIDA_2"/>
    <property type="match status" value="1"/>
</dbReference>
<evidence type="ECO:0000250" key="1">
    <source>
        <dbReference type="UniProtKB" id="O66962"/>
    </source>
</evidence>
<evidence type="ECO:0000250" key="2">
    <source>
        <dbReference type="UniProtKB" id="Q9Y2Z2"/>
    </source>
</evidence>
<evidence type="ECO:0000255" key="3"/>
<evidence type="ECO:0000269" key="4">
    <source>
    </source>
</evidence>
<evidence type="ECO:0000305" key="5"/>
<evidence type="ECO:0000312" key="6">
    <source>
        <dbReference type="MGI" id="MGI:1915541"/>
    </source>
</evidence>
<accession>Q923Z3</accession>
<accession>Q9D2Q5</accession>
<keyword id="KW-0274">FAD</keyword>
<keyword id="KW-0285">Flavoprotein</keyword>
<keyword id="KW-0488">Methylation</keyword>
<keyword id="KW-0496">Mitochondrion</keyword>
<keyword id="KW-1185">Reference proteome</keyword>
<keyword id="KW-0809">Transit peptide</keyword>
<keyword id="KW-0819">tRNA processing</keyword>
<feature type="transit peptide" description="Mitochondrion" evidence="3">
    <location>
        <begin position="1"/>
        <end position="25"/>
    </location>
</feature>
<feature type="chain" id="PRO_0000042690" description="5-taurinomethyluridine-[tRNA] synthase subunit MTO1, mitochondrial">
    <location>
        <begin position="26"/>
        <end position="669"/>
    </location>
</feature>
<feature type="binding site" evidence="1">
    <location>
        <begin position="42"/>
        <end position="47"/>
    </location>
    <ligand>
        <name>FAD</name>
        <dbReference type="ChEBI" id="CHEBI:57692"/>
    </ligand>
</feature>
<feature type="binding site" evidence="1">
    <location>
        <position position="154"/>
    </location>
    <ligand>
        <name>FAD</name>
        <dbReference type="ChEBI" id="CHEBI:57692"/>
    </ligand>
</feature>
<feature type="binding site" evidence="1">
    <location>
        <position position="217"/>
    </location>
    <ligand>
        <name>FAD</name>
        <dbReference type="ChEBI" id="CHEBI:57692"/>
    </ligand>
</feature>
<feature type="binding site" evidence="1">
    <location>
        <position position="406"/>
    </location>
    <ligand>
        <name>FAD</name>
        <dbReference type="ChEBI" id="CHEBI:57692"/>
    </ligand>
</feature>
<feature type="modified residue" description="N6-methyllysine" evidence="2">
    <location>
        <position position="507"/>
    </location>
</feature>
<feature type="sequence conflict" description="In Ref. 2; BAB31540." evidence="5" ref="2">
    <original>Q</original>
    <variation>H</variation>
    <location>
        <position position="602"/>
    </location>
</feature>
<proteinExistence type="evidence at transcript level"/>
<gene>
    <name evidence="6" type="primary">Mto1</name>
</gene>
<protein>
    <recommendedName>
        <fullName evidence="2">5-taurinomethyluridine-[tRNA] synthase subunit MTO1, mitochondrial</fullName>
    </recommendedName>
    <alternativeName>
        <fullName evidence="2">Mitochondrial tRNA translation optimization 1</fullName>
    </alternativeName>
    <alternativeName>
        <fullName evidence="2">Protein MTO1 homolog, mitochondrial</fullName>
    </alternativeName>
</protein>
<sequence>MFLLRGRGHWAAASLGRRLPLRRLRSDSAAPCTPHFDVVVIGGGHAGTEAAAAAARCGSRTLLLTHRVDTIGQMSCNPSFGGIGKGHLMREVDALDGLCSRICDQSGIHYKVLNRRKGPAVWGLRAQIDRKLYKQNMQKEILSTPLLTVQKGAVEDLVLAEPEPGYPGKSRVRGVVLADGSTIYAESVILTTGTFLRGMIIIGLEMHPAGRLGDQPSIGLAQTLEKLGFMVGRLKTGTPPRLGKESINFSILNKHTPDDPSIPFSFLSDSVWIKPEDQLPCYLTHTNPRVDAIVLENLHLNSHVQETTKGPRYCPSIESKVLRFPNRLHQVWLEPEGMDSDLIYPQGLSVTLPAELQEKMITCIRGLEKAKMVHPGYGVQYDYLDPRQISPSLETHLVQRLFFAGQINGTTGYEEAAAQGVIAGINASLRVSRKPPFVVSRTEGYIGVLIDDLTTLGTSEPYRMFTSRVEFRLSLRPDNADTRLTFRAHKEAGCVSSQRFERALWMKSSLEEGISVLKSIKFSSSKWKKLIPQIPISINRSLPVSALDVLKYEEVDMESLVGVLPEPLEKYTACRELARRLKIEASYESVLSYQLQEIKEVQQDEALQLPHELDYLTIRDVSLSQEVREKLHLSRPQTIGAASRIPGVTPAAIINLLRFVRSTRQSRQQ</sequence>
<name>MTO1_MOUSE</name>